<protein>
    <recommendedName>
        <fullName evidence="5">Cytochrome P450 monooxygenase pvhE</fullName>
        <ecNumber evidence="4">1.-.-.-</ecNumber>
    </recommendedName>
    <alternativeName>
        <fullName evidence="5">Varicidin biosynthesis cluster protein E</fullName>
    </alternativeName>
</protein>
<reference key="1">
    <citation type="journal article" date="2019" name="J. Am. Chem. Soc.">
        <title>Genome-mined Diels-Alderase catalyzes formation of the cis-octahydrodecalins of varicidin A and B.</title>
        <authorList>
            <person name="Tan D."/>
            <person name="Jamieson C.S."/>
            <person name="Ohashi M."/>
            <person name="Tang M.C."/>
            <person name="Houk K.N."/>
            <person name="Tang Y."/>
        </authorList>
    </citation>
    <scope>NUCLEOTIDE SEQUENCE [GENOMIC DNA]</scope>
    <scope>FUNCTION</scope>
    <scope>CATALYTIC ACTIVITY</scope>
    <scope>PATHWAY</scope>
    <source>
        <strain>HXQ-H-1</strain>
    </source>
</reference>
<organism>
    <name type="scientific">Talaromyces variabilis</name>
    <name type="common">Penicillium variabile</name>
    <dbReference type="NCBI Taxonomy" id="28576"/>
    <lineage>
        <taxon>Eukaryota</taxon>
        <taxon>Fungi</taxon>
        <taxon>Dikarya</taxon>
        <taxon>Ascomycota</taxon>
        <taxon>Pezizomycotina</taxon>
        <taxon>Eurotiomycetes</taxon>
        <taxon>Eurotiomycetidae</taxon>
        <taxon>Eurotiales</taxon>
        <taxon>Trichocomaceae</taxon>
        <taxon>Talaromyces</taxon>
    </lineage>
</organism>
<feature type="chain" id="PRO_0000453347" description="Cytochrome P450 monooxygenase pvhE">
    <location>
        <begin position="1"/>
        <end position="539"/>
    </location>
</feature>
<feature type="transmembrane region" description="Helical" evidence="2">
    <location>
        <begin position="15"/>
        <end position="31"/>
    </location>
</feature>
<feature type="binding site" description="axial binding residue" evidence="1">
    <location>
        <position position="473"/>
    </location>
    <ligand>
        <name>heme</name>
        <dbReference type="ChEBI" id="CHEBI:30413"/>
    </ligand>
    <ligandPart>
        <name>Fe</name>
        <dbReference type="ChEBI" id="CHEBI:18248"/>
    </ligandPart>
</feature>
<feature type="glycosylation site" description="N-linked (GlcNAc...) asparagine" evidence="3">
    <location>
        <position position="379"/>
    </location>
</feature>
<dbReference type="EC" id="1.-.-.-" evidence="4"/>
<dbReference type="EMBL" id="MK376933">
    <property type="protein sequence ID" value="AZZ09610.1"/>
    <property type="molecule type" value="Genomic_DNA"/>
</dbReference>
<dbReference type="SMR" id="A0A3S5HYN5"/>
<dbReference type="GlyCosmos" id="A0A3S5HYN5">
    <property type="glycosylation" value="1 site, No reported glycans"/>
</dbReference>
<dbReference type="GO" id="GO:0016020">
    <property type="term" value="C:membrane"/>
    <property type="evidence" value="ECO:0007669"/>
    <property type="project" value="UniProtKB-SubCell"/>
</dbReference>
<dbReference type="GO" id="GO:0020037">
    <property type="term" value="F:heme binding"/>
    <property type="evidence" value="ECO:0007669"/>
    <property type="project" value="InterPro"/>
</dbReference>
<dbReference type="GO" id="GO:0005506">
    <property type="term" value="F:iron ion binding"/>
    <property type="evidence" value="ECO:0007669"/>
    <property type="project" value="InterPro"/>
</dbReference>
<dbReference type="GO" id="GO:0004497">
    <property type="term" value="F:monooxygenase activity"/>
    <property type="evidence" value="ECO:0007669"/>
    <property type="project" value="UniProtKB-KW"/>
</dbReference>
<dbReference type="GO" id="GO:0016705">
    <property type="term" value="F:oxidoreductase activity, acting on paired donors, with incorporation or reduction of molecular oxygen"/>
    <property type="evidence" value="ECO:0007669"/>
    <property type="project" value="InterPro"/>
</dbReference>
<dbReference type="CDD" id="cd11063">
    <property type="entry name" value="CYP52"/>
    <property type="match status" value="1"/>
</dbReference>
<dbReference type="Gene3D" id="1.10.630.10">
    <property type="entry name" value="Cytochrome P450"/>
    <property type="match status" value="1"/>
</dbReference>
<dbReference type="InterPro" id="IPR001128">
    <property type="entry name" value="Cyt_P450"/>
</dbReference>
<dbReference type="InterPro" id="IPR047146">
    <property type="entry name" value="Cyt_P450_E_CYP52_fungi"/>
</dbReference>
<dbReference type="InterPro" id="IPR002401">
    <property type="entry name" value="Cyt_P450_E_grp-I"/>
</dbReference>
<dbReference type="InterPro" id="IPR036396">
    <property type="entry name" value="Cyt_P450_sf"/>
</dbReference>
<dbReference type="PANTHER" id="PTHR24287">
    <property type="entry name" value="P450, PUTATIVE (EUROFUNG)-RELATED"/>
    <property type="match status" value="1"/>
</dbReference>
<dbReference type="PANTHER" id="PTHR24287:SF5">
    <property type="entry name" value="P450, PUTATIVE (EUROFUNG)-RELATED"/>
    <property type="match status" value="1"/>
</dbReference>
<dbReference type="Pfam" id="PF00067">
    <property type="entry name" value="p450"/>
    <property type="match status" value="1"/>
</dbReference>
<dbReference type="PRINTS" id="PR00463">
    <property type="entry name" value="EP450I"/>
</dbReference>
<dbReference type="PRINTS" id="PR00385">
    <property type="entry name" value="P450"/>
</dbReference>
<dbReference type="SUPFAM" id="SSF48264">
    <property type="entry name" value="Cytochrome P450"/>
    <property type="match status" value="1"/>
</dbReference>
<proteinExistence type="evidence at protein level"/>
<accession>A0A3S5HYN5</accession>
<name>PVHE_TALVA</name>
<evidence type="ECO:0000250" key="1">
    <source>
        <dbReference type="UniProtKB" id="P04798"/>
    </source>
</evidence>
<evidence type="ECO:0000255" key="2"/>
<evidence type="ECO:0000255" key="3">
    <source>
        <dbReference type="PROSITE-ProRule" id="PRU00498"/>
    </source>
</evidence>
<evidence type="ECO:0000269" key="4">
    <source>
    </source>
</evidence>
<evidence type="ECO:0000303" key="5">
    <source>
    </source>
</evidence>
<evidence type="ECO:0000305" key="6"/>
<sequence length="539" mass="61255">MSVLNIAVSRCSPTVAFCSLVILCILFKVLTRVREDRKIRSLGKYGHQIQSKLPLGIGFLYSMVKAVRAQKNFEFWRDNIFGASGRWTVETRIMNERTIFTADPGNIKAMLATQFSDYGKGAAFHAMWKDFLGNSIFATDGERWSASRKLIRPQFTRDRLSDLQCFEAHMQTLFRVLDAGGSPLDSKHAEETPMSQGKAIDIRDLLYRFTFDVSTDFLLGQDVQSLTTPRQEFAHAFDEVQRMQTIFVRSRHFSKFMSKKSFRDSLKVMNGFIHKHVRRALSLSPQETQQKSQSGSKYTFLEAIAGFTRDPTMLRDQIVGVLLAGRDTTAATLSWALYELSRHPEAVDALRREILQTVGSDAPTYDQLKNMPYLKAVLNETLRIYPAVPYNVRIALEDTTLPHGGGPDGSEPIAVLKNTKIAYSTLILHRRRDLYPATSEKFADPAIFSPDRWLHWHPSAHDYIPFSAGPRLCTGQQFALMEMSYVLCRLFQRFERVESHMQHIDGGNPTLKADIILSPGDGVWVSFHEPKQIDSNQLL</sequence>
<gene>
    <name evidence="5" type="primary">pvhE</name>
</gene>
<keyword id="KW-0325">Glycoprotein</keyword>
<keyword id="KW-0349">Heme</keyword>
<keyword id="KW-0408">Iron</keyword>
<keyword id="KW-0472">Membrane</keyword>
<keyword id="KW-0479">Metal-binding</keyword>
<keyword id="KW-0503">Monooxygenase</keyword>
<keyword id="KW-0560">Oxidoreductase</keyword>
<keyword id="KW-0812">Transmembrane</keyword>
<keyword id="KW-1133">Transmembrane helix</keyword>
<comment type="function">
    <text evidence="4">Cytochrome P450 monooxygenase; part of the gene cluster that mediates the biosynthesis of varicidin A, an antifungal natural product containing a cis-octahydrodecalin core (PubMed:30609896). The PKS module of pvhA together with the enoylreductase pvhC catalyze the formation of the polyketide unit which is then conjugated to L-isoleucine by the condensation domain of the NRPS module (PubMed:30609896). Activity of the Dieckmann cyclase domain (RED) of pvhA results in release of an acyclic tetramate (PubMed:30609896). The cytochrome P450 monooxygenase pvhE then catalyzes the oxidation of the C21 methyl group to a to carboxylate group (PubMed:30609896). The methyltransferase pvhD then further methylates the pvhE product (PubMed:30609896). The Diels-Alderase pvhB is able to catalyze Diels-Alder cycloaddition using both pvhE and pvhD products as substrates to form the decalin ring, yielding varicidin B and A, respectively (PubMed:30609896).</text>
</comment>
<comment type="cofactor">
    <cofactor evidence="1">
        <name>heme</name>
        <dbReference type="ChEBI" id="CHEBI:30413"/>
    </cofactor>
</comment>
<comment type="pathway">
    <text evidence="4">Secondary metabolite biosynthesis.</text>
</comment>
<comment type="subcellular location">
    <subcellularLocation>
        <location evidence="2">Membrane</location>
        <topology evidence="2">Single-pass membrane protein</topology>
    </subcellularLocation>
</comment>
<comment type="similarity">
    <text evidence="6">Belongs to the cytochrome P450 family.</text>
</comment>